<evidence type="ECO:0000255" key="1">
    <source>
        <dbReference type="HAMAP-Rule" id="MF_00739"/>
    </source>
</evidence>
<keyword id="KW-0963">Cytoplasm</keyword>
<keyword id="KW-0378">Hydrolase</keyword>
<proteinExistence type="inferred from homology"/>
<accession>Q4KJ06</accession>
<protein>
    <recommendedName>
        <fullName evidence="1">Urease subunit gamma</fullName>
        <ecNumber evidence="1">3.5.1.5</ecNumber>
    </recommendedName>
    <alternativeName>
        <fullName evidence="1">Urea amidohydrolase subunit gamma</fullName>
    </alternativeName>
</protein>
<sequence>MDLTPREKDKLLIFTAGLVAERRLARGLKLNYPETMAYISAALLEGARDGQTVAELMHYGTTLLSREQVMEGIPEMIPDIQVEATFPDGTKLVTVHQPIA</sequence>
<gene>
    <name evidence="1" type="primary">ureA</name>
    <name type="ordered locus">PFL_0635</name>
</gene>
<feature type="chain" id="PRO_0000234210" description="Urease subunit gamma">
    <location>
        <begin position="1"/>
        <end position="100"/>
    </location>
</feature>
<comment type="catalytic activity">
    <reaction evidence="1">
        <text>urea + 2 H2O + H(+) = hydrogencarbonate + 2 NH4(+)</text>
        <dbReference type="Rhea" id="RHEA:20557"/>
        <dbReference type="ChEBI" id="CHEBI:15377"/>
        <dbReference type="ChEBI" id="CHEBI:15378"/>
        <dbReference type="ChEBI" id="CHEBI:16199"/>
        <dbReference type="ChEBI" id="CHEBI:17544"/>
        <dbReference type="ChEBI" id="CHEBI:28938"/>
        <dbReference type="EC" id="3.5.1.5"/>
    </reaction>
</comment>
<comment type="pathway">
    <text evidence="1">Nitrogen metabolism; urea degradation; CO(2) and NH(3) from urea (urease route): step 1/1.</text>
</comment>
<comment type="subunit">
    <text evidence="1">Heterotrimer of UreA (gamma), UreB (beta) and UreC (alpha) subunits. Three heterotrimers associate to form the active enzyme.</text>
</comment>
<comment type="subcellular location">
    <subcellularLocation>
        <location evidence="1">Cytoplasm</location>
    </subcellularLocation>
</comment>
<comment type="similarity">
    <text evidence="1">Belongs to the urease gamma subunit family.</text>
</comment>
<organism>
    <name type="scientific">Pseudomonas fluorescens (strain ATCC BAA-477 / NRRL B-23932 / Pf-5)</name>
    <dbReference type="NCBI Taxonomy" id="220664"/>
    <lineage>
        <taxon>Bacteria</taxon>
        <taxon>Pseudomonadati</taxon>
        <taxon>Pseudomonadota</taxon>
        <taxon>Gammaproteobacteria</taxon>
        <taxon>Pseudomonadales</taxon>
        <taxon>Pseudomonadaceae</taxon>
        <taxon>Pseudomonas</taxon>
    </lineage>
</organism>
<reference key="1">
    <citation type="journal article" date="2005" name="Nat. Biotechnol.">
        <title>Complete genome sequence of the plant commensal Pseudomonas fluorescens Pf-5.</title>
        <authorList>
            <person name="Paulsen I.T."/>
            <person name="Press C.M."/>
            <person name="Ravel J."/>
            <person name="Kobayashi D.Y."/>
            <person name="Myers G.S.A."/>
            <person name="Mavrodi D.V."/>
            <person name="DeBoy R.T."/>
            <person name="Seshadri R."/>
            <person name="Ren Q."/>
            <person name="Madupu R."/>
            <person name="Dodson R.J."/>
            <person name="Durkin A.S."/>
            <person name="Brinkac L.M."/>
            <person name="Daugherty S.C."/>
            <person name="Sullivan S.A."/>
            <person name="Rosovitz M.J."/>
            <person name="Gwinn M.L."/>
            <person name="Zhou L."/>
            <person name="Schneider D.J."/>
            <person name="Cartinhour S.W."/>
            <person name="Nelson W.C."/>
            <person name="Weidman J."/>
            <person name="Watkins K."/>
            <person name="Tran K."/>
            <person name="Khouri H."/>
            <person name="Pierson E.A."/>
            <person name="Pierson L.S. III"/>
            <person name="Thomashow L.S."/>
            <person name="Loper J.E."/>
        </authorList>
    </citation>
    <scope>NUCLEOTIDE SEQUENCE [LARGE SCALE GENOMIC DNA]</scope>
    <source>
        <strain>ATCC BAA-477 / NRRL B-23932 / Pf-5</strain>
    </source>
</reference>
<name>URE3_PSEF5</name>
<dbReference type="EC" id="3.5.1.5" evidence="1"/>
<dbReference type="EMBL" id="CP000076">
    <property type="protein sequence ID" value="AAY96042.1"/>
    <property type="molecule type" value="Genomic_DNA"/>
</dbReference>
<dbReference type="RefSeq" id="WP_011059003.1">
    <property type="nucleotide sequence ID" value="NC_004129.6"/>
</dbReference>
<dbReference type="SMR" id="Q4KJ06"/>
<dbReference type="STRING" id="220664.PFL_0635"/>
<dbReference type="GeneID" id="57473624"/>
<dbReference type="KEGG" id="pfl:PFL_0635"/>
<dbReference type="PATRIC" id="fig|220664.5.peg.651"/>
<dbReference type="eggNOG" id="COG0831">
    <property type="taxonomic scope" value="Bacteria"/>
</dbReference>
<dbReference type="HOGENOM" id="CLU_145825_1_0_6"/>
<dbReference type="UniPathway" id="UPA00258">
    <property type="reaction ID" value="UER00370"/>
</dbReference>
<dbReference type="Proteomes" id="UP000008540">
    <property type="component" value="Chromosome"/>
</dbReference>
<dbReference type="GO" id="GO:0005737">
    <property type="term" value="C:cytoplasm"/>
    <property type="evidence" value="ECO:0007669"/>
    <property type="project" value="UniProtKB-SubCell"/>
</dbReference>
<dbReference type="GO" id="GO:0016151">
    <property type="term" value="F:nickel cation binding"/>
    <property type="evidence" value="ECO:0007669"/>
    <property type="project" value="InterPro"/>
</dbReference>
<dbReference type="GO" id="GO:0009039">
    <property type="term" value="F:urease activity"/>
    <property type="evidence" value="ECO:0007669"/>
    <property type="project" value="UniProtKB-UniRule"/>
</dbReference>
<dbReference type="GO" id="GO:0043419">
    <property type="term" value="P:urea catabolic process"/>
    <property type="evidence" value="ECO:0007669"/>
    <property type="project" value="UniProtKB-UniRule"/>
</dbReference>
<dbReference type="CDD" id="cd00390">
    <property type="entry name" value="Urease_gamma"/>
    <property type="match status" value="1"/>
</dbReference>
<dbReference type="Gene3D" id="3.30.280.10">
    <property type="entry name" value="Urease, gamma-like subunit"/>
    <property type="match status" value="1"/>
</dbReference>
<dbReference type="HAMAP" id="MF_00739">
    <property type="entry name" value="Urease_gamma"/>
    <property type="match status" value="1"/>
</dbReference>
<dbReference type="InterPro" id="IPR012010">
    <property type="entry name" value="Urease_gamma"/>
</dbReference>
<dbReference type="InterPro" id="IPR002026">
    <property type="entry name" value="Urease_gamma/gamma-beta_su"/>
</dbReference>
<dbReference type="InterPro" id="IPR036463">
    <property type="entry name" value="Urease_gamma_sf"/>
</dbReference>
<dbReference type="InterPro" id="IPR050069">
    <property type="entry name" value="Urease_subunit"/>
</dbReference>
<dbReference type="NCBIfam" id="NF009712">
    <property type="entry name" value="PRK13241.1"/>
    <property type="match status" value="1"/>
</dbReference>
<dbReference type="NCBIfam" id="TIGR00193">
    <property type="entry name" value="urease_gam"/>
    <property type="match status" value="1"/>
</dbReference>
<dbReference type="PANTHER" id="PTHR33569">
    <property type="entry name" value="UREASE"/>
    <property type="match status" value="1"/>
</dbReference>
<dbReference type="PANTHER" id="PTHR33569:SF1">
    <property type="entry name" value="UREASE"/>
    <property type="match status" value="1"/>
</dbReference>
<dbReference type="Pfam" id="PF00547">
    <property type="entry name" value="Urease_gamma"/>
    <property type="match status" value="1"/>
</dbReference>
<dbReference type="PIRSF" id="PIRSF001223">
    <property type="entry name" value="Urease_gamma"/>
    <property type="match status" value="1"/>
</dbReference>
<dbReference type="SUPFAM" id="SSF54111">
    <property type="entry name" value="Urease, gamma-subunit"/>
    <property type="match status" value="1"/>
</dbReference>